<gene>
    <name type="primary">lifO</name>
    <name type="ordered locus">VV1_2350</name>
</gene>
<evidence type="ECO:0000250" key="1"/>
<evidence type="ECO:0000255" key="2"/>
<evidence type="ECO:0000305" key="3"/>
<feature type="chain" id="PRO_0000218488" description="Lipase chaperone">
    <location>
        <begin position="1"/>
        <end position="280"/>
    </location>
</feature>
<feature type="transmembrane region" description="Helical" evidence="2">
    <location>
        <begin position="5"/>
        <end position="22"/>
    </location>
</feature>
<accession>Q8DA60</accession>
<protein>
    <recommendedName>
        <fullName>Lipase chaperone</fullName>
    </recommendedName>
    <alternativeName>
        <fullName>Lipase activator protein</fullName>
    </alternativeName>
    <alternativeName>
        <fullName>Lipase foldase</fullName>
    </alternativeName>
    <alternativeName>
        <fullName>Lipase helper protein</fullName>
    </alternativeName>
    <alternativeName>
        <fullName>Lipase modulator</fullName>
    </alternativeName>
</protein>
<name>LIFO_VIBVU</name>
<comment type="function">
    <text evidence="1">May be involved in the folding of the extracellular lipase during its passage through the periplasm.</text>
</comment>
<comment type="subcellular location">
    <subcellularLocation>
        <location evidence="1">Cell inner membrane</location>
        <topology evidence="1">Single-pass membrane protein</topology>
        <orientation evidence="1">Periplasmic side</orientation>
    </subcellularLocation>
</comment>
<comment type="similarity">
    <text evidence="3">Belongs to the lipase chaperone family.</text>
</comment>
<proteinExistence type="inferred from homology"/>
<keyword id="KW-0997">Cell inner membrane</keyword>
<keyword id="KW-1003">Cell membrane</keyword>
<keyword id="KW-0143">Chaperone</keyword>
<keyword id="KW-0442">Lipid degradation</keyword>
<keyword id="KW-0443">Lipid metabolism</keyword>
<keyword id="KW-0472">Membrane</keyword>
<keyword id="KW-0812">Transmembrane</keyword>
<keyword id="KW-1133">Transmembrane helix</keyword>
<dbReference type="EMBL" id="AE016795">
    <property type="protein sequence ID" value="AAO10724.1"/>
    <property type="molecule type" value="Genomic_DNA"/>
</dbReference>
<dbReference type="RefSeq" id="WP_011080218.1">
    <property type="nucleotide sequence ID" value="NC_004459.3"/>
</dbReference>
<dbReference type="SMR" id="Q8DA60"/>
<dbReference type="KEGG" id="vvu:VV1_2350"/>
<dbReference type="HOGENOM" id="CLU_085683_0_0_6"/>
<dbReference type="Proteomes" id="UP000002275">
    <property type="component" value="Chromosome 1"/>
</dbReference>
<dbReference type="GO" id="GO:0005886">
    <property type="term" value="C:plasma membrane"/>
    <property type="evidence" value="ECO:0007669"/>
    <property type="project" value="UniProtKB-SubCell"/>
</dbReference>
<dbReference type="GO" id="GO:0051082">
    <property type="term" value="F:unfolded protein binding"/>
    <property type="evidence" value="ECO:0007669"/>
    <property type="project" value="UniProtKB-UniRule"/>
</dbReference>
<dbReference type="GO" id="GO:0016042">
    <property type="term" value="P:lipid catabolic process"/>
    <property type="evidence" value="ECO:0007669"/>
    <property type="project" value="UniProtKB-UniRule"/>
</dbReference>
<dbReference type="GO" id="GO:0006457">
    <property type="term" value="P:protein folding"/>
    <property type="evidence" value="ECO:0007669"/>
    <property type="project" value="UniProtKB-UniRule"/>
</dbReference>
<dbReference type="HAMAP" id="MF_00790">
    <property type="entry name" value="Lipase_chap"/>
    <property type="match status" value="1"/>
</dbReference>
<dbReference type="InterPro" id="IPR004961">
    <property type="entry name" value="Lipase_chaperone"/>
</dbReference>
<dbReference type="NCBIfam" id="NF002337">
    <property type="entry name" value="PRK01294.1-5"/>
    <property type="match status" value="1"/>
</dbReference>
<dbReference type="Pfam" id="PF03280">
    <property type="entry name" value="Lipase_chap"/>
    <property type="match status" value="1"/>
</dbReference>
<dbReference type="SUPFAM" id="SSF158855">
    <property type="entry name" value="Lipase chaperone-like"/>
    <property type="match status" value="1"/>
</dbReference>
<organism>
    <name type="scientific">Vibrio vulnificus (strain CMCP6)</name>
    <dbReference type="NCBI Taxonomy" id="216895"/>
    <lineage>
        <taxon>Bacteria</taxon>
        <taxon>Pseudomonadati</taxon>
        <taxon>Pseudomonadota</taxon>
        <taxon>Gammaproteobacteria</taxon>
        <taxon>Vibrionales</taxon>
        <taxon>Vibrionaceae</taxon>
        <taxon>Vibrio</taxon>
    </lineage>
</organism>
<reference key="1">
    <citation type="submission" date="2002-12" db="EMBL/GenBank/DDBJ databases">
        <title>Complete genome sequence of Vibrio vulnificus CMCP6.</title>
        <authorList>
            <person name="Rhee J.H."/>
            <person name="Kim S.Y."/>
            <person name="Chung S.S."/>
            <person name="Kim J.J."/>
            <person name="Moon Y.H."/>
            <person name="Jeong H."/>
            <person name="Choy H.E."/>
        </authorList>
    </citation>
    <scope>NUCLEOTIDE SEQUENCE [LARGE SCALE GENOMIC DNA]</scope>
    <source>
        <strain>CMCP6</strain>
    </source>
</reference>
<sequence>MKKTALTIITIALGSLGAVYFLPSEPAAQKDIRATSQHDTSVDNTSAKAFLDYSLSTLGEKPLQTITQDVVREERALGELQLDEQLFALYLRYKQALADLDIEITGSDIISLETLHQAILDLQREYFSAQQIDLIFGEENQLRALALEKARLSEQGYSAEEQKQLWRDHLALQPEYVQESDANRRLMSELAQGEDAQTTYLKRVELVGEAGAQRLEVLDQNRAEFDRVFQHYLVQRSAILDDLGLSDEQKHKQITMLRETSFDAKQWRRIEALERIADGG</sequence>